<proteinExistence type="inferred from homology"/>
<name>NDK_ACIB3</name>
<accession>B7H073</accession>
<evidence type="ECO:0000250" key="1">
    <source>
        <dbReference type="UniProtKB" id="Q9KNM4"/>
    </source>
</evidence>
<evidence type="ECO:0000250" key="2">
    <source>
        <dbReference type="UniProtKB" id="Q9KTX4"/>
    </source>
</evidence>
<evidence type="ECO:0000255" key="3">
    <source>
        <dbReference type="HAMAP-Rule" id="MF_00451"/>
    </source>
</evidence>
<keyword id="KW-0067">ATP-binding</keyword>
<keyword id="KW-0963">Cytoplasm</keyword>
<keyword id="KW-0418">Kinase</keyword>
<keyword id="KW-0460">Magnesium</keyword>
<keyword id="KW-0479">Metal-binding</keyword>
<keyword id="KW-0546">Nucleotide metabolism</keyword>
<keyword id="KW-0547">Nucleotide-binding</keyword>
<keyword id="KW-0597">Phosphoprotein</keyword>
<keyword id="KW-0808">Transferase</keyword>
<dbReference type="EC" id="2.7.4.6" evidence="3"/>
<dbReference type="EMBL" id="CP001172">
    <property type="protein sequence ID" value="ACJ57449.1"/>
    <property type="molecule type" value="Genomic_DNA"/>
</dbReference>
<dbReference type="RefSeq" id="WP_000963851.1">
    <property type="nucleotide sequence ID" value="NZ_CP001172.1"/>
</dbReference>
<dbReference type="SMR" id="B7H073"/>
<dbReference type="GeneID" id="92892501"/>
<dbReference type="HOGENOM" id="CLU_060216_8_1_6"/>
<dbReference type="Proteomes" id="UP000006924">
    <property type="component" value="Chromosome"/>
</dbReference>
<dbReference type="GO" id="GO:0005737">
    <property type="term" value="C:cytoplasm"/>
    <property type="evidence" value="ECO:0007669"/>
    <property type="project" value="UniProtKB-SubCell"/>
</dbReference>
<dbReference type="GO" id="GO:0005524">
    <property type="term" value="F:ATP binding"/>
    <property type="evidence" value="ECO:0007669"/>
    <property type="project" value="UniProtKB-UniRule"/>
</dbReference>
<dbReference type="GO" id="GO:0046872">
    <property type="term" value="F:metal ion binding"/>
    <property type="evidence" value="ECO:0007669"/>
    <property type="project" value="UniProtKB-KW"/>
</dbReference>
<dbReference type="GO" id="GO:0004550">
    <property type="term" value="F:nucleoside diphosphate kinase activity"/>
    <property type="evidence" value="ECO:0007669"/>
    <property type="project" value="UniProtKB-UniRule"/>
</dbReference>
<dbReference type="GO" id="GO:0006241">
    <property type="term" value="P:CTP biosynthetic process"/>
    <property type="evidence" value="ECO:0007669"/>
    <property type="project" value="UniProtKB-UniRule"/>
</dbReference>
<dbReference type="GO" id="GO:0006183">
    <property type="term" value="P:GTP biosynthetic process"/>
    <property type="evidence" value="ECO:0007669"/>
    <property type="project" value="UniProtKB-UniRule"/>
</dbReference>
<dbReference type="GO" id="GO:0006228">
    <property type="term" value="P:UTP biosynthetic process"/>
    <property type="evidence" value="ECO:0007669"/>
    <property type="project" value="UniProtKB-UniRule"/>
</dbReference>
<dbReference type="CDD" id="cd04413">
    <property type="entry name" value="NDPk_I"/>
    <property type="match status" value="1"/>
</dbReference>
<dbReference type="FunFam" id="3.30.70.141:FF:000001">
    <property type="entry name" value="Nucleoside diphosphate kinase"/>
    <property type="match status" value="1"/>
</dbReference>
<dbReference type="Gene3D" id="3.30.70.141">
    <property type="entry name" value="Nucleoside diphosphate kinase-like domain"/>
    <property type="match status" value="1"/>
</dbReference>
<dbReference type="HAMAP" id="MF_00451">
    <property type="entry name" value="NDP_kinase"/>
    <property type="match status" value="1"/>
</dbReference>
<dbReference type="InterPro" id="IPR034907">
    <property type="entry name" value="NDK-like_dom"/>
</dbReference>
<dbReference type="InterPro" id="IPR036850">
    <property type="entry name" value="NDK-like_dom_sf"/>
</dbReference>
<dbReference type="InterPro" id="IPR001564">
    <property type="entry name" value="Nucleoside_diP_kinase"/>
</dbReference>
<dbReference type="InterPro" id="IPR023005">
    <property type="entry name" value="Nucleoside_diP_kinase_AS"/>
</dbReference>
<dbReference type="NCBIfam" id="NF001908">
    <property type="entry name" value="PRK00668.1"/>
    <property type="match status" value="1"/>
</dbReference>
<dbReference type="PANTHER" id="PTHR46161">
    <property type="entry name" value="NUCLEOSIDE DIPHOSPHATE KINASE"/>
    <property type="match status" value="1"/>
</dbReference>
<dbReference type="PANTHER" id="PTHR46161:SF3">
    <property type="entry name" value="NUCLEOSIDE DIPHOSPHATE KINASE DDB_G0292928-RELATED"/>
    <property type="match status" value="1"/>
</dbReference>
<dbReference type="Pfam" id="PF00334">
    <property type="entry name" value="NDK"/>
    <property type="match status" value="1"/>
</dbReference>
<dbReference type="PRINTS" id="PR01243">
    <property type="entry name" value="NUCDPKINASE"/>
</dbReference>
<dbReference type="SMART" id="SM00562">
    <property type="entry name" value="NDK"/>
    <property type="match status" value="1"/>
</dbReference>
<dbReference type="SUPFAM" id="SSF54919">
    <property type="entry name" value="Nucleoside diphosphate kinase, NDK"/>
    <property type="match status" value="1"/>
</dbReference>
<dbReference type="PROSITE" id="PS00469">
    <property type="entry name" value="NDPK"/>
    <property type="match status" value="1"/>
</dbReference>
<dbReference type="PROSITE" id="PS51374">
    <property type="entry name" value="NDPK_LIKE"/>
    <property type="match status" value="1"/>
</dbReference>
<sequence>MAIERTLSIVKPDAVSKNHIGEIFARFEKAGLKIVATKMKHLSQADAEGFYAEHKERGFFGDLVAFMTSGPVVVSVLEGENAVLAHREILGATNPKEAAPGTIRADFAVSIDENAAHGSDSVASAEREIAYFFADNEICPRTR</sequence>
<reference key="1">
    <citation type="journal article" date="2008" name="J. Bacteriol.">
        <title>Comparative genome sequence analysis of multidrug-resistant Acinetobacter baumannii.</title>
        <authorList>
            <person name="Adams M.D."/>
            <person name="Goglin K."/>
            <person name="Molyneaux N."/>
            <person name="Hujer K.M."/>
            <person name="Lavender H."/>
            <person name="Jamison J.J."/>
            <person name="MacDonald I.J."/>
            <person name="Martin K.M."/>
            <person name="Russo T."/>
            <person name="Campagnari A.A."/>
            <person name="Hujer A.M."/>
            <person name="Bonomo R.A."/>
            <person name="Gill S.R."/>
        </authorList>
    </citation>
    <scope>NUCLEOTIDE SEQUENCE [LARGE SCALE GENOMIC DNA]</scope>
    <source>
        <strain>AB307-0294</strain>
    </source>
</reference>
<comment type="function">
    <text evidence="3">Major role in the synthesis of nucleoside triphosphates other than ATP. The ATP gamma phosphate is transferred to the NDP beta phosphate via a ping-pong mechanism, using a phosphorylated active-site intermediate.</text>
</comment>
<comment type="function">
    <text evidence="1">(Microbial infection) Catalyzes the phosphorylation of dZDP to dZTP, when the bacterium is infected by a phage that produces the substrate for the synthesis of dZTP (2- amino-2'-deoxyadenosine 5'-triphosphate), which is then used by the phage as a DNA polymerase substrate.</text>
</comment>
<comment type="catalytic activity">
    <reaction evidence="2">
        <text>dZDP + ATP = dZTP + ADP</text>
        <dbReference type="Rhea" id="RHEA:67644"/>
        <dbReference type="ChEBI" id="CHEBI:30616"/>
        <dbReference type="ChEBI" id="CHEBI:172929"/>
        <dbReference type="ChEBI" id="CHEBI:172931"/>
        <dbReference type="ChEBI" id="CHEBI:456216"/>
    </reaction>
</comment>
<comment type="catalytic activity">
    <reaction evidence="3">
        <text>a 2'-deoxyribonucleoside 5'-diphosphate + ATP = a 2'-deoxyribonucleoside 5'-triphosphate + ADP</text>
        <dbReference type="Rhea" id="RHEA:44640"/>
        <dbReference type="ChEBI" id="CHEBI:30616"/>
        <dbReference type="ChEBI" id="CHEBI:61560"/>
        <dbReference type="ChEBI" id="CHEBI:73316"/>
        <dbReference type="ChEBI" id="CHEBI:456216"/>
        <dbReference type="EC" id="2.7.4.6"/>
    </reaction>
</comment>
<comment type="catalytic activity">
    <reaction evidence="3">
        <text>a ribonucleoside 5'-diphosphate + ATP = a ribonucleoside 5'-triphosphate + ADP</text>
        <dbReference type="Rhea" id="RHEA:18113"/>
        <dbReference type="ChEBI" id="CHEBI:30616"/>
        <dbReference type="ChEBI" id="CHEBI:57930"/>
        <dbReference type="ChEBI" id="CHEBI:61557"/>
        <dbReference type="ChEBI" id="CHEBI:456216"/>
        <dbReference type="EC" id="2.7.4.6"/>
    </reaction>
</comment>
<comment type="cofactor">
    <cofactor evidence="3">
        <name>Mg(2+)</name>
        <dbReference type="ChEBI" id="CHEBI:18420"/>
    </cofactor>
</comment>
<comment type="pathway">
    <text evidence="2">Purine metabolism.</text>
</comment>
<comment type="subunit">
    <text evidence="3">Homotetramer.</text>
</comment>
<comment type="subcellular location">
    <subcellularLocation>
        <location evidence="3">Cytoplasm</location>
    </subcellularLocation>
</comment>
<comment type="similarity">
    <text evidence="3">Belongs to the NDK family.</text>
</comment>
<organism>
    <name type="scientific">Acinetobacter baumannii (strain AB307-0294)</name>
    <dbReference type="NCBI Taxonomy" id="557600"/>
    <lineage>
        <taxon>Bacteria</taxon>
        <taxon>Pseudomonadati</taxon>
        <taxon>Pseudomonadota</taxon>
        <taxon>Gammaproteobacteria</taxon>
        <taxon>Moraxellales</taxon>
        <taxon>Moraxellaceae</taxon>
        <taxon>Acinetobacter</taxon>
        <taxon>Acinetobacter calcoaceticus/baumannii complex</taxon>
    </lineage>
</organism>
<protein>
    <recommendedName>
        <fullName evidence="3">Nucleoside diphosphate kinase</fullName>
        <shortName evidence="3">NDK</shortName>
        <shortName evidence="3">NDP kinase</shortName>
        <ecNumber evidence="3">2.7.4.6</ecNumber>
    </recommendedName>
    <alternativeName>
        <fullName evidence="3">Nucleoside-2-P kinase</fullName>
    </alternativeName>
</protein>
<gene>
    <name evidence="3" type="primary">ndk</name>
    <name type="ordered locus">ABBFA_003037</name>
</gene>
<feature type="chain" id="PRO_1000192245" description="Nucleoside diphosphate kinase">
    <location>
        <begin position="1"/>
        <end position="143"/>
    </location>
</feature>
<feature type="active site" description="Pros-phosphohistidine intermediate" evidence="3">
    <location>
        <position position="117"/>
    </location>
</feature>
<feature type="binding site" evidence="3">
    <location>
        <position position="11"/>
    </location>
    <ligand>
        <name>ATP</name>
        <dbReference type="ChEBI" id="CHEBI:30616"/>
    </ligand>
</feature>
<feature type="binding site" evidence="3">
    <location>
        <position position="59"/>
    </location>
    <ligand>
        <name>ATP</name>
        <dbReference type="ChEBI" id="CHEBI:30616"/>
    </ligand>
</feature>
<feature type="binding site" evidence="3">
    <location>
        <position position="87"/>
    </location>
    <ligand>
        <name>ATP</name>
        <dbReference type="ChEBI" id="CHEBI:30616"/>
    </ligand>
</feature>
<feature type="binding site" evidence="3">
    <location>
        <position position="93"/>
    </location>
    <ligand>
        <name>ATP</name>
        <dbReference type="ChEBI" id="CHEBI:30616"/>
    </ligand>
</feature>
<feature type="binding site" evidence="3">
    <location>
        <position position="104"/>
    </location>
    <ligand>
        <name>ATP</name>
        <dbReference type="ChEBI" id="CHEBI:30616"/>
    </ligand>
</feature>
<feature type="binding site" evidence="3">
    <location>
        <position position="114"/>
    </location>
    <ligand>
        <name>ATP</name>
        <dbReference type="ChEBI" id="CHEBI:30616"/>
    </ligand>
</feature>